<comment type="function">
    <text>GRP proteins have a marked affinity for hydroxyapatite. They may play a role in the formation of the protective acquired pellicle at the saliva-tooth interface.</text>
</comment>
<comment type="subcellular location">
    <subcellularLocation>
        <location>Secreted</location>
    </subcellularLocation>
</comment>
<comment type="tissue specificity">
    <text>Submandibular gland acinar cells.</text>
</comment>
<keyword id="KW-0091">Biomineralization</keyword>
<keyword id="KW-1185">Reference proteome</keyword>
<keyword id="KW-0677">Repeat</keyword>
<keyword id="KW-0964">Secreted</keyword>
<keyword id="KW-0732">Signal</keyword>
<sequence>MLVVLLTAALLALSSAQGTDEEVNNAETSDVPADSEQQPVDSGSDPPSADADAENVQEGESAAPANEEPPATSGSEEEQQQQEPTQAENQEPPATSGSEEEQQQQEPTQAENQEPPATSGSEEEQQQQEPTQAEDQQPPATSGSEEEQQQQESTQAENQEPSDSAGEGQETQPEEGNVESPPSSPENSQEQPQQTNPEEKPPAPKTQEEPQHDSGRPKKPLLPFIANLIRERIRKLLARSPLGRRF</sequence>
<feature type="signal peptide">
    <location>
        <begin position="1"/>
        <end position="18"/>
    </location>
</feature>
<feature type="chain" id="PRO_0000013038" description="Submandibular gland secretory Glx-rich protein CA">
    <location>
        <begin position="19"/>
        <end position="246"/>
    </location>
</feature>
<feature type="repeat" description="1">
    <location>
        <begin position="67"/>
        <end position="89"/>
    </location>
</feature>
<feature type="repeat" description="2">
    <location>
        <begin position="90"/>
        <end position="112"/>
    </location>
</feature>
<feature type="repeat" description="3">
    <location>
        <begin position="113"/>
        <end position="135"/>
    </location>
</feature>
<feature type="repeat" description="4">
    <location>
        <begin position="136"/>
        <end position="158"/>
    </location>
</feature>
<feature type="repeat" description="5">
    <location>
        <begin position="159"/>
        <end position="181"/>
    </location>
</feature>
<feature type="region of interest" description="Disordered" evidence="1">
    <location>
        <begin position="14"/>
        <end position="223"/>
    </location>
</feature>
<feature type="region of interest" description="5 X 23 AA tandem repeats">
    <location>
        <begin position="67"/>
        <end position="181"/>
    </location>
</feature>
<feature type="compositionally biased region" description="Low complexity" evidence="1">
    <location>
        <begin position="39"/>
        <end position="50"/>
    </location>
</feature>
<feature type="compositionally biased region" description="Low complexity" evidence="1">
    <location>
        <begin position="58"/>
        <end position="71"/>
    </location>
</feature>
<feature type="compositionally biased region" description="Low complexity" evidence="1">
    <location>
        <begin position="81"/>
        <end position="93"/>
    </location>
</feature>
<feature type="compositionally biased region" description="Low complexity" evidence="1">
    <location>
        <begin position="104"/>
        <end position="116"/>
    </location>
</feature>
<feature type="compositionally biased region" description="Low complexity" evidence="1">
    <location>
        <begin position="127"/>
        <end position="141"/>
    </location>
</feature>
<feature type="compositionally biased region" description="Low complexity" evidence="1">
    <location>
        <begin position="150"/>
        <end position="159"/>
    </location>
</feature>
<feature type="compositionally biased region" description="Low complexity" evidence="1">
    <location>
        <begin position="178"/>
        <end position="196"/>
    </location>
</feature>
<feature type="compositionally biased region" description="Basic and acidic residues" evidence="1">
    <location>
        <begin position="197"/>
        <end position="216"/>
    </location>
</feature>
<feature type="sequence conflict" description="In Ref. 2; AAA41276." evidence="2" ref="2">
    <original>A</original>
    <variation>P</variation>
    <location>
        <position position="63"/>
    </location>
</feature>
<feature type="sequence conflict" description="In Ref. 2." evidence="2" ref="2">
    <original>D</original>
    <variation>N</variation>
    <location>
        <position position="135"/>
    </location>
</feature>
<feature type="sequence conflict" description="In Ref. 2." evidence="2" ref="2">
    <original>Q</original>
    <variation>E</variation>
    <location>
        <position position="137"/>
    </location>
</feature>
<feature type="sequence conflict" description="In Ref. 2; AAA41276." evidence="2" ref="2">
    <original>E</original>
    <variation>D</variation>
    <location>
        <position position="208"/>
    </location>
</feature>
<feature type="sequence conflict" description="In Ref. 2; AAA41276." evidence="2" ref="2">
    <original>R</original>
    <variation>P</variation>
    <location>
        <position position="230"/>
    </location>
</feature>
<protein>
    <recommendedName>
        <fullName>Submandibular gland secretory Glx-rich protein CA</fullName>
        <shortName>GRP-CA</shortName>
    </recommendedName>
</protein>
<organism>
    <name type="scientific">Rattus norvegicus</name>
    <name type="common">Rat</name>
    <dbReference type="NCBI Taxonomy" id="10116"/>
    <lineage>
        <taxon>Eukaryota</taxon>
        <taxon>Metazoa</taxon>
        <taxon>Chordata</taxon>
        <taxon>Craniata</taxon>
        <taxon>Vertebrata</taxon>
        <taxon>Euteleostomi</taxon>
        <taxon>Mammalia</taxon>
        <taxon>Eutheria</taxon>
        <taxon>Euarchontoglires</taxon>
        <taxon>Glires</taxon>
        <taxon>Rodentia</taxon>
        <taxon>Myomorpha</taxon>
        <taxon>Muroidea</taxon>
        <taxon>Muridae</taxon>
        <taxon>Murinae</taxon>
        <taxon>Rattus</taxon>
    </lineage>
</organism>
<dbReference type="EMBL" id="M58653">
    <property type="protein sequence ID" value="AAA41278.1"/>
    <property type="molecule type" value="mRNA"/>
</dbReference>
<dbReference type="EMBL" id="J02730">
    <property type="protein sequence ID" value="AAA41276.1"/>
    <property type="molecule type" value="mRNA"/>
</dbReference>
<dbReference type="PIR" id="A29573">
    <property type="entry name" value="A29573"/>
</dbReference>
<dbReference type="PIR" id="A38647">
    <property type="entry name" value="A38647"/>
</dbReference>
<dbReference type="SMR" id="P08568"/>
<dbReference type="AGR" id="RGD:619775"/>
<dbReference type="RGD" id="619775">
    <property type="gene designation" value="Grpca"/>
</dbReference>
<dbReference type="InParanoid" id="P08568"/>
<dbReference type="PhylomeDB" id="P08568"/>
<dbReference type="PRO" id="PR:P08568"/>
<dbReference type="Proteomes" id="UP000002494">
    <property type="component" value="Unplaced"/>
</dbReference>
<dbReference type="GO" id="GO:0005576">
    <property type="term" value="C:extracellular region"/>
    <property type="evidence" value="ECO:0007669"/>
    <property type="project" value="UniProtKB-SubCell"/>
</dbReference>
<dbReference type="GO" id="GO:0046848">
    <property type="term" value="F:hydroxyapatite binding"/>
    <property type="evidence" value="ECO:0000314"/>
    <property type="project" value="RGD"/>
</dbReference>
<dbReference type="GO" id="GO:0031214">
    <property type="term" value="P:biomineral tissue development"/>
    <property type="evidence" value="ECO:0007669"/>
    <property type="project" value="UniProtKB-KW"/>
</dbReference>
<dbReference type="InterPro" id="IPR026086">
    <property type="entry name" value="Pro-rich"/>
</dbReference>
<dbReference type="PANTHER" id="PTHR23203:SF20">
    <property type="entry name" value="BASIC SALIVARY PROLINE-RICH PROTEIN 1-RELATED"/>
    <property type="match status" value="1"/>
</dbReference>
<dbReference type="PANTHER" id="PTHR23203">
    <property type="entry name" value="PROLINE-RICH PROTEIN"/>
    <property type="match status" value="1"/>
</dbReference>
<dbReference type="Pfam" id="PF15240">
    <property type="entry name" value="Pro-rich"/>
    <property type="match status" value="1"/>
</dbReference>
<dbReference type="SMART" id="SM01412">
    <property type="entry name" value="Pro-rich"/>
    <property type="match status" value="1"/>
</dbReference>
<gene>
    <name type="primary">Grpca</name>
</gene>
<name>GRPA_RAT</name>
<proteinExistence type="evidence at transcript level"/>
<accession>P08568</accession>
<evidence type="ECO:0000256" key="1">
    <source>
        <dbReference type="SAM" id="MobiDB-lite"/>
    </source>
</evidence>
<evidence type="ECO:0000305" key="2"/>
<reference key="1">
    <citation type="journal article" date="1991" name="J. Biol. Chem.">
        <title>Secretagogue-coupled changes in the expression of glutamine/glutamic acid-rich proteins (GRPs). Isoproterenol induces changes in GRP transcript expression and changes in isoforms secreted.</title>
        <authorList>
            <person name="Cooper L.F."/>
            <person name="Elia D.M."/>
            <person name="Tabak L.A."/>
        </authorList>
    </citation>
    <scope>NUCLEOTIDE SEQUENCE [MRNA]</scope>
    <source>
        <strain>Wistar</strain>
    </source>
</reference>
<reference key="2">
    <citation type="journal article" date="1987" name="J. Biol. Chem.">
        <title>Molecular characterization of glutamic acid/glutamine-rich secretory proteins from rat submandibular glands.</title>
        <authorList>
            <person name="Mirels L."/>
            <person name="Bedi G.S."/>
            <person name="Dickinson D.P."/>
            <person name="Gross K.W."/>
            <person name="Tabak L.A."/>
        </authorList>
    </citation>
    <scope>NUCLEOTIDE SEQUENCE [MRNA] OF 17-246</scope>
</reference>